<organism>
    <name type="scientific">Streptococcus pneumoniae serotype 4 (strain ATCC BAA-334 / TIGR4)</name>
    <dbReference type="NCBI Taxonomy" id="170187"/>
    <lineage>
        <taxon>Bacteria</taxon>
        <taxon>Bacillati</taxon>
        <taxon>Bacillota</taxon>
        <taxon>Bacilli</taxon>
        <taxon>Lactobacillales</taxon>
        <taxon>Streptococcaceae</taxon>
        <taxon>Streptococcus</taxon>
    </lineage>
</organism>
<feature type="chain" id="PRO_0000097115" description="Pneumococcal vaccine antigen A">
    <location>
        <begin position="1"/>
        <end position="204"/>
    </location>
</feature>
<reference key="1">
    <citation type="journal article" date="2001" name="Infect. Immun.">
        <title>Use of a whole genome approach to identify vaccine molecules affording protection against Streptococcus pneumoniae infection.</title>
        <authorList>
            <person name="Wizemann T.M."/>
            <person name="Heinrichs J.H."/>
            <person name="Adamou J.E."/>
            <person name="Erwin A.L."/>
            <person name="Kunsch C."/>
            <person name="Choi G.H."/>
            <person name="Barash S.C."/>
            <person name="Rosen C.A."/>
            <person name="Masure H.R."/>
            <person name="Tuomanen E."/>
            <person name="Gayle A."/>
            <person name="Brewah Y.A."/>
            <person name="Walsh W."/>
            <person name="Barren P."/>
            <person name="Lathigra R."/>
            <person name="Hanson M."/>
            <person name="Langermann S."/>
            <person name="Johnson S."/>
            <person name="Koenig S."/>
        </authorList>
    </citation>
    <scope>NUCLEOTIDE SEQUENCE [GENOMIC DNA]</scope>
    <source>
        <strain>N4</strain>
    </source>
</reference>
<reference key="2">
    <citation type="journal article" date="2001" name="Science">
        <title>Complete genome sequence of a virulent isolate of Streptococcus pneumoniae.</title>
        <authorList>
            <person name="Tettelin H."/>
            <person name="Nelson K.E."/>
            <person name="Paulsen I.T."/>
            <person name="Eisen J.A."/>
            <person name="Read T.D."/>
            <person name="Peterson S.N."/>
            <person name="Heidelberg J.F."/>
            <person name="DeBoy R.T."/>
            <person name="Haft D.H."/>
            <person name="Dodson R.J."/>
            <person name="Durkin A.S."/>
            <person name="Gwinn M.L."/>
            <person name="Kolonay J.F."/>
            <person name="Nelson W.C."/>
            <person name="Peterson J.D."/>
            <person name="Umayam L.A."/>
            <person name="White O."/>
            <person name="Salzberg S.L."/>
            <person name="Lewis M.R."/>
            <person name="Radune D."/>
            <person name="Holtzapple E.K."/>
            <person name="Khouri H.M."/>
            <person name="Wolf A.M."/>
            <person name="Utterback T.R."/>
            <person name="Hansen C.L."/>
            <person name="McDonald L.A."/>
            <person name="Feldblyum T.V."/>
            <person name="Angiuoli S.V."/>
            <person name="Dickinson T."/>
            <person name="Hickey E.K."/>
            <person name="Holt I.E."/>
            <person name="Loftus B.J."/>
            <person name="Yang F."/>
            <person name="Smith H.O."/>
            <person name="Venter J.C."/>
            <person name="Dougherty B.A."/>
            <person name="Morrison D.A."/>
            <person name="Hollingshead S.K."/>
            <person name="Fraser C.M."/>
        </authorList>
    </citation>
    <scope>NUCLEOTIDE SEQUENCE [LARGE SCALE GENOMIC DNA]</scope>
    <source>
        <strain>ATCC BAA-334 / TIGR4</strain>
    </source>
</reference>
<keyword id="KW-1185">Reference proteome</keyword>
<proteinExistence type="predicted"/>
<sequence>MFKRIRRVLVLAVFLFAGYKAYRVHQDVKQVMTYQPMVREILSEQDTPANEELVLAMIYTETKGKEGDVMQSSESASGSTNTINDNASSIRQGIQTLTGNLYLAQKKGVDIWTAVQAYNFGPAYIDFIAQNGKENTLALAKQYSRETVAPLLGNRTGKTYSYIHPISIFHGAELYVNGGNYYYSRQVRLNLYIIKCFTLFSTSG</sequence>
<protein>
    <recommendedName>
        <fullName>Pneumococcal vaccine antigen A</fullName>
    </recommendedName>
</protein>
<evidence type="ECO:0000305" key="1"/>
<accession>Q9AHT6</accession>
<dbReference type="EMBL" id="AF291698">
    <property type="protein sequence ID" value="AAK19158.1"/>
    <property type="molecule type" value="Genomic_DNA"/>
</dbReference>
<dbReference type="EMBL" id="AE005672">
    <property type="protein sequence ID" value="AAK75141.1"/>
    <property type="molecule type" value="Genomic_DNA"/>
</dbReference>
<dbReference type="PIR" id="D95118">
    <property type="entry name" value="D95118"/>
</dbReference>
<dbReference type="SMR" id="Q9AHT6"/>
<dbReference type="CAZy" id="GH23">
    <property type="family name" value="Glycoside Hydrolase Family 23"/>
</dbReference>
<dbReference type="PaxDb" id="170187-SP_1026"/>
<dbReference type="DNASU" id="931540"/>
<dbReference type="EnsemblBacteria" id="AAK75141">
    <property type="protein sequence ID" value="AAK75141"/>
    <property type="gene ID" value="SP_1026"/>
</dbReference>
<dbReference type="KEGG" id="spn:SP_1026"/>
<dbReference type="eggNOG" id="COG0741">
    <property type="taxonomic scope" value="Bacteria"/>
</dbReference>
<dbReference type="PhylomeDB" id="Q9AHT6"/>
<dbReference type="BioCyc" id="SPNE170187:G1FZB-1056-MONOMER"/>
<dbReference type="Proteomes" id="UP000000585">
    <property type="component" value="Chromosome"/>
</dbReference>
<dbReference type="GO" id="GO:0009986">
    <property type="term" value="C:cell surface"/>
    <property type="evidence" value="ECO:0007669"/>
    <property type="project" value="UniProtKB-SubCell"/>
</dbReference>
<dbReference type="GO" id="GO:0016052">
    <property type="term" value="P:carbohydrate catabolic process"/>
    <property type="evidence" value="ECO:0007669"/>
    <property type="project" value="TreeGrafter"/>
</dbReference>
<dbReference type="CDD" id="cd16891">
    <property type="entry name" value="CwlT-like"/>
    <property type="match status" value="1"/>
</dbReference>
<dbReference type="FunFam" id="1.10.530.10:FF:000013">
    <property type="entry name" value="Pneumococcal vaccine antigen A"/>
    <property type="match status" value="1"/>
</dbReference>
<dbReference type="Gene3D" id="1.10.530.10">
    <property type="match status" value="1"/>
</dbReference>
<dbReference type="InterPro" id="IPR047194">
    <property type="entry name" value="CwlT-like_lysozyme"/>
</dbReference>
<dbReference type="InterPro" id="IPR023346">
    <property type="entry name" value="Lysozyme-like_dom_sf"/>
</dbReference>
<dbReference type="PANTHER" id="PTHR34135">
    <property type="entry name" value="LYSOZYME"/>
    <property type="match status" value="1"/>
</dbReference>
<dbReference type="PANTHER" id="PTHR34135:SF3">
    <property type="entry name" value="PNEUMOCOCCAL VACCINE ANTIGEN A"/>
    <property type="match status" value="1"/>
</dbReference>
<dbReference type="Pfam" id="PF13702">
    <property type="entry name" value="Lysozyme_like"/>
    <property type="match status" value="1"/>
</dbReference>
<dbReference type="SUPFAM" id="SSF53955">
    <property type="entry name" value="Lysozyme-like"/>
    <property type="match status" value="1"/>
</dbReference>
<comment type="subcellular location">
    <subcellularLocation>
        <location evidence="1">Cell surface</location>
    </subcellularLocation>
</comment>
<gene>
    <name type="primary">pvaA</name>
    <name type="ordered locus">SP_1026</name>
</gene>
<name>PVAA_STRPN</name>